<reference key="1">
    <citation type="journal article" date="2002" name="Nat. Biotechnol.">
        <title>Genome sequence of the dissimilatory metal ion-reducing bacterium Shewanella oneidensis.</title>
        <authorList>
            <person name="Heidelberg J.F."/>
            <person name="Paulsen I.T."/>
            <person name="Nelson K.E."/>
            <person name="Gaidos E.J."/>
            <person name="Nelson W.C."/>
            <person name="Read T.D."/>
            <person name="Eisen J.A."/>
            <person name="Seshadri R."/>
            <person name="Ward N.L."/>
            <person name="Methe B.A."/>
            <person name="Clayton R.A."/>
            <person name="Meyer T."/>
            <person name="Tsapin A."/>
            <person name="Scott J."/>
            <person name="Beanan M.J."/>
            <person name="Brinkac L.M."/>
            <person name="Daugherty S.C."/>
            <person name="DeBoy R.T."/>
            <person name="Dodson R.J."/>
            <person name="Durkin A.S."/>
            <person name="Haft D.H."/>
            <person name="Kolonay J.F."/>
            <person name="Madupu R."/>
            <person name="Peterson J.D."/>
            <person name="Umayam L.A."/>
            <person name="White O."/>
            <person name="Wolf A.M."/>
            <person name="Vamathevan J.J."/>
            <person name="Weidman J.F."/>
            <person name="Impraim M."/>
            <person name="Lee K."/>
            <person name="Berry K.J."/>
            <person name="Lee C."/>
            <person name="Mueller J."/>
            <person name="Khouri H.M."/>
            <person name="Gill J."/>
            <person name="Utterback T.R."/>
            <person name="McDonald L.A."/>
            <person name="Feldblyum T.V."/>
            <person name="Smith H.O."/>
            <person name="Venter J.C."/>
            <person name="Nealson K.H."/>
            <person name="Fraser C.M."/>
        </authorList>
    </citation>
    <scope>NUCLEOTIDE SEQUENCE [LARGE SCALE GENOMIC DNA]</scope>
    <source>
        <strain>ATCC 700550 / JCM 31522 / CIP 106686 / LMG 19005 / NCIMB 14063 / MR-1</strain>
    </source>
</reference>
<feature type="chain" id="PRO_0000240110" description="NADH-quinone oxidoreductase subunit H">
    <location>
        <begin position="1"/>
        <end position="322"/>
    </location>
</feature>
<feature type="transmembrane region" description="Helical" evidence="1">
    <location>
        <begin position="12"/>
        <end position="32"/>
    </location>
</feature>
<feature type="transmembrane region" description="Helical" evidence="1">
    <location>
        <begin position="79"/>
        <end position="99"/>
    </location>
</feature>
<feature type="transmembrane region" description="Helical" evidence="1">
    <location>
        <begin position="111"/>
        <end position="131"/>
    </location>
</feature>
<feature type="transmembrane region" description="Helical" evidence="1">
    <location>
        <begin position="151"/>
        <end position="171"/>
    </location>
</feature>
<feature type="transmembrane region" description="Helical" evidence="1">
    <location>
        <begin position="183"/>
        <end position="203"/>
    </location>
</feature>
<feature type="transmembrane region" description="Helical" evidence="1">
    <location>
        <begin position="234"/>
        <end position="254"/>
    </location>
</feature>
<feature type="transmembrane region" description="Helical" evidence="1">
    <location>
        <begin position="262"/>
        <end position="282"/>
    </location>
</feature>
<feature type="transmembrane region" description="Helical" evidence="1">
    <location>
        <begin position="301"/>
        <end position="321"/>
    </location>
</feature>
<name>NUOH_SHEON</name>
<sequence>MSDSLTELLLEIGKALIVLVGIVGAGAFMSFIERRLLALWQDRHGPNRVGPFGLFQLLADMIKMFFKEDWIPPFADRRIFILAPIIAFTAFILAFAVVPITPTWGVADLNVGLLYILAIAGLAVYAVLFAGWSSNNKYSLLGSLRASAQTLSYEVFLGLSLMGIVIQTGSFNLRDIVEAQAGLWNVVPQFLGFITFLFAGVAVTHRHPFDQPEAEQELADGYHIEYAGMKWGLFFVGEYIGIVLISSLIVTLFFGGWHGPWLPPFFWFALKTACFMVFFILLRASLPRPRFDQVMSFGWKVCLPLTLINMLITAAVVLMNVQ</sequence>
<proteinExistence type="inferred from homology"/>
<dbReference type="EC" id="7.1.1.-" evidence="1"/>
<dbReference type="EMBL" id="AE014299">
    <property type="protein sequence ID" value="AAN54088.1"/>
    <property type="molecule type" value="Genomic_DNA"/>
</dbReference>
<dbReference type="RefSeq" id="NP_716643.1">
    <property type="nucleotide sequence ID" value="NC_004347.2"/>
</dbReference>
<dbReference type="RefSeq" id="WP_011071280.1">
    <property type="nucleotide sequence ID" value="NC_004347.2"/>
</dbReference>
<dbReference type="SMR" id="Q8EI35"/>
<dbReference type="STRING" id="211586.SO_1015"/>
<dbReference type="PaxDb" id="211586-SO_1015"/>
<dbReference type="DNASU" id="1168856"/>
<dbReference type="KEGG" id="son:SO_1015"/>
<dbReference type="PATRIC" id="fig|211586.12.peg.971"/>
<dbReference type="eggNOG" id="COG1005">
    <property type="taxonomic scope" value="Bacteria"/>
</dbReference>
<dbReference type="HOGENOM" id="CLU_015134_0_1_6"/>
<dbReference type="OrthoDB" id="9803734at2"/>
<dbReference type="PhylomeDB" id="Q8EI35"/>
<dbReference type="BioCyc" id="SONE211586:G1GMP-941-MONOMER"/>
<dbReference type="Proteomes" id="UP000008186">
    <property type="component" value="Chromosome"/>
</dbReference>
<dbReference type="GO" id="GO:0005886">
    <property type="term" value="C:plasma membrane"/>
    <property type="evidence" value="ECO:0007669"/>
    <property type="project" value="UniProtKB-SubCell"/>
</dbReference>
<dbReference type="GO" id="GO:0045271">
    <property type="term" value="C:respiratory chain complex I"/>
    <property type="evidence" value="ECO:0000318"/>
    <property type="project" value="GO_Central"/>
</dbReference>
<dbReference type="GO" id="GO:0016655">
    <property type="term" value="F:oxidoreductase activity, acting on NAD(P)H, quinone or similar compound as acceptor"/>
    <property type="evidence" value="ECO:0007669"/>
    <property type="project" value="UniProtKB-UniRule"/>
</dbReference>
<dbReference type="GO" id="GO:0048038">
    <property type="term" value="F:quinone binding"/>
    <property type="evidence" value="ECO:0007669"/>
    <property type="project" value="UniProtKB-KW"/>
</dbReference>
<dbReference type="GO" id="GO:0009060">
    <property type="term" value="P:aerobic respiration"/>
    <property type="evidence" value="ECO:0000318"/>
    <property type="project" value="GO_Central"/>
</dbReference>
<dbReference type="HAMAP" id="MF_01350">
    <property type="entry name" value="NDH1_NuoH"/>
    <property type="match status" value="1"/>
</dbReference>
<dbReference type="InterPro" id="IPR001694">
    <property type="entry name" value="NADH_UbQ_OxRdtase_su1/FPO"/>
</dbReference>
<dbReference type="InterPro" id="IPR018086">
    <property type="entry name" value="NADH_UbQ_OxRdtase_su1_CS"/>
</dbReference>
<dbReference type="NCBIfam" id="NF004740">
    <property type="entry name" value="PRK06076.1-1"/>
    <property type="match status" value="1"/>
</dbReference>
<dbReference type="NCBIfam" id="NF004741">
    <property type="entry name" value="PRK06076.1-2"/>
    <property type="match status" value="1"/>
</dbReference>
<dbReference type="PANTHER" id="PTHR11432">
    <property type="entry name" value="NADH DEHYDROGENASE SUBUNIT 1"/>
    <property type="match status" value="1"/>
</dbReference>
<dbReference type="PANTHER" id="PTHR11432:SF3">
    <property type="entry name" value="NADH-UBIQUINONE OXIDOREDUCTASE CHAIN 1"/>
    <property type="match status" value="1"/>
</dbReference>
<dbReference type="Pfam" id="PF00146">
    <property type="entry name" value="NADHdh"/>
    <property type="match status" value="1"/>
</dbReference>
<dbReference type="PROSITE" id="PS00667">
    <property type="entry name" value="COMPLEX1_ND1_1"/>
    <property type="match status" value="1"/>
</dbReference>
<dbReference type="PROSITE" id="PS00668">
    <property type="entry name" value="COMPLEX1_ND1_2"/>
    <property type="match status" value="1"/>
</dbReference>
<comment type="function">
    <text evidence="1">NDH-1 shuttles electrons from NADH, via FMN and iron-sulfur (Fe-S) centers, to quinones in the respiratory chain. The immediate electron acceptor for the enzyme in this species is believed to be ubiquinone. Couples the redox reaction to proton translocation (for every two electrons transferred, four hydrogen ions are translocated across the cytoplasmic membrane), and thus conserves the redox energy in a proton gradient. This subunit may bind ubiquinone.</text>
</comment>
<comment type="catalytic activity">
    <reaction evidence="1">
        <text>a quinone + NADH + 5 H(+)(in) = a quinol + NAD(+) + 4 H(+)(out)</text>
        <dbReference type="Rhea" id="RHEA:57888"/>
        <dbReference type="ChEBI" id="CHEBI:15378"/>
        <dbReference type="ChEBI" id="CHEBI:24646"/>
        <dbReference type="ChEBI" id="CHEBI:57540"/>
        <dbReference type="ChEBI" id="CHEBI:57945"/>
        <dbReference type="ChEBI" id="CHEBI:132124"/>
    </reaction>
</comment>
<comment type="subunit">
    <text evidence="1">NDH-1 is composed of 13 different subunits. Subunits NuoA, H, J, K, L, M, N constitute the membrane sector of the complex.</text>
</comment>
<comment type="subcellular location">
    <subcellularLocation>
        <location evidence="1">Cell inner membrane</location>
        <topology evidence="1">Multi-pass membrane protein</topology>
    </subcellularLocation>
</comment>
<comment type="similarity">
    <text evidence="1">Belongs to the complex I subunit 1 family.</text>
</comment>
<gene>
    <name evidence="1" type="primary">nuoH</name>
    <name type="ordered locus">SO_1015</name>
</gene>
<protein>
    <recommendedName>
        <fullName evidence="1">NADH-quinone oxidoreductase subunit H</fullName>
        <ecNumber evidence="1">7.1.1.-</ecNumber>
    </recommendedName>
    <alternativeName>
        <fullName evidence="1">NADH dehydrogenase I subunit H</fullName>
    </alternativeName>
    <alternativeName>
        <fullName evidence="1">NDH-1 subunit H</fullName>
    </alternativeName>
</protein>
<accession>Q8EI35</accession>
<keyword id="KW-0997">Cell inner membrane</keyword>
<keyword id="KW-1003">Cell membrane</keyword>
<keyword id="KW-0472">Membrane</keyword>
<keyword id="KW-0520">NAD</keyword>
<keyword id="KW-0874">Quinone</keyword>
<keyword id="KW-1185">Reference proteome</keyword>
<keyword id="KW-1278">Translocase</keyword>
<keyword id="KW-0812">Transmembrane</keyword>
<keyword id="KW-1133">Transmembrane helix</keyword>
<keyword id="KW-0830">Ubiquinone</keyword>
<organism>
    <name type="scientific">Shewanella oneidensis (strain ATCC 700550 / JCM 31522 / CIP 106686 / LMG 19005 / NCIMB 14063 / MR-1)</name>
    <dbReference type="NCBI Taxonomy" id="211586"/>
    <lineage>
        <taxon>Bacteria</taxon>
        <taxon>Pseudomonadati</taxon>
        <taxon>Pseudomonadota</taxon>
        <taxon>Gammaproteobacteria</taxon>
        <taxon>Alteromonadales</taxon>
        <taxon>Shewanellaceae</taxon>
        <taxon>Shewanella</taxon>
    </lineage>
</organism>
<evidence type="ECO:0000255" key="1">
    <source>
        <dbReference type="HAMAP-Rule" id="MF_01350"/>
    </source>
</evidence>